<feature type="chain" id="PRO_0000121684" description="tRNA-specific 2-thiouridylase MnmA">
    <location>
        <begin position="1"/>
        <end position="373"/>
    </location>
</feature>
<feature type="region of interest" description="Interaction with target base in tRNA" evidence="1">
    <location>
        <begin position="98"/>
        <end position="100"/>
    </location>
</feature>
<feature type="region of interest" description="Interaction with tRNA" evidence="1">
    <location>
        <begin position="150"/>
        <end position="152"/>
    </location>
</feature>
<feature type="region of interest" description="Interaction with tRNA" evidence="1">
    <location>
        <begin position="312"/>
        <end position="313"/>
    </location>
</feature>
<feature type="active site" description="Nucleophile" evidence="1">
    <location>
        <position position="103"/>
    </location>
</feature>
<feature type="active site" description="Cysteine persulfide intermediate" evidence="1">
    <location>
        <position position="200"/>
    </location>
</feature>
<feature type="binding site" evidence="1">
    <location>
        <begin position="12"/>
        <end position="19"/>
    </location>
    <ligand>
        <name>ATP</name>
        <dbReference type="ChEBI" id="CHEBI:30616"/>
    </ligand>
</feature>
<feature type="binding site" evidence="1">
    <location>
        <position position="38"/>
    </location>
    <ligand>
        <name>ATP</name>
        <dbReference type="ChEBI" id="CHEBI:30616"/>
    </ligand>
</feature>
<feature type="binding site" evidence="1">
    <location>
        <position position="127"/>
    </location>
    <ligand>
        <name>ATP</name>
        <dbReference type="ChEBI" id="CHEBI:30616"/>
    </ligand>
</feature>
<feature type="site" description="Interaction with tRNA" evidence="1">
    <location>
        <position position="128"/>
    </location>
</feature>
<feature type="site" description="Interaction with tRNA" evidence="1">
    <location>
        <position position="344"/>
    </location>
</feature>
<feature type="disulfide bond" description="Alternate" evidence="1">
    <location>
        <begin position="103"/>
        <end position="200"/>
    </location>
</feature>
<name>MNMA_STRMU</name>
<keyword id="KW-0067">ATP-binding</keyword>
<keyword id="KW-0963">Cytoplasm</keyword>
<keyword id="KW-1015">Disulfide bond</keyword>
<keyword id="KW-0547">Nucleotide-binding</keyword>
<keyword id="KW-1185">Reference proteome</keyword>
<keyword id="KW-0694">RNA-binding</keyword>
<keyword id="KW-0808">Transferase</keyword>
<keyword id="KW-0819">tRNA processing</keyword>
<keyword id="KW-0820">tRNA-binding</keyword>
<organism>
    <name type="scientific">Streptococcus mutans serotype c (strain ATCC 700610 / UA159)</name>
    <dbReference type="NCBI Taxonomy" id="210007"/>
    <lineage>
        <taxon>Bacteria</taxon>
        <taxon>Bacillati</taxon>
        <taxon>Bacillota</taxon>
        <taxon>Bacilli</taxon>
        <taxon>Lactobacillales</taxon>
        <taxon>Streptococcaceae</taxon>
        <taxon>Streptococcus</taxon>
    </lineage>
</organism>
<protein>
    <recommendedName>
        <fullName evidence="1">tRNA-specific 2-thiouridylase MnmA</fullName>
        <ecNumber evidence="1">2.8.1.13</ecNumber>
    </recommendedName>
</protein>
<dbReference type="EC" id="2.8.1.13" evidence="1"/>
<dbReference type="EMBL" id="AE014133">
    <property type="protein sequence ID" value="AAN59734.1"/>
    <property type="molecule type" value="Genomic_DNA"/>
</dbReference>
<dbReference type="RefSeq" id="NP_722428.1">
    <property type="nucleotide sequence ID" value="NC_004350.2"/>
</dbReference>
<dbReference type="RefSeq" id="WP_002262445.1">
    <property type="nucleotide sequence ID" value="NC_004350.2"/>
</dbReference>
<dbReference type="SMR" id="Q8DRS4"/>
<dbReference type="STRING" id="210007.SMU_2143c"/>
<dbReference type="KEGG" id="smu:SMU_2143c"/>
<dbReference type="PATRIC" id="fig|210007.7.peg.1907"/>
<dbReference type="eggNOG" id="COG0482">
    <property type="taxonomic scope" value="Bacteria"/>
</dbReference>
<dbReference type="HOGENOM" id="CLU_035188_1_0_9"/>
<dbReference type="OrthoDB" id="9800696at2"/>
<dbReference type="PhylomeDB" id="Q8DRS4"/>
<dbReference type="Proteomes" id="UP000002512">
    <property type="component" value="Chromosome"/>
</dbReference>
<dbReference type="GO" id="GO:0005737">
    <property type="term" value="C:cytoplasm"/>
    <property type="evidence" value="ECO:0007669"/>
    <property type="project" value="UniProtKB-SubCell"/>
</dbReference>
<dbReference type="GO" id="GO:0005524">
    <property type="term" value="F:ATP binding"/>
    <property type="evidence" value="ECO:0007669"/>
    <property type="project" value="UniProtKB-KW"/>
</dbReference>
<dbReference type="GO" id="GO:0000049">
    <property type="term" value="F:tRNA binding"/>
    <property type="evidence" value="ECO:0007669"/>
    <property type="project" value="UniProtKB-KW"/>
</dbReference>
<dbReference type="GO" id="GO:0103016">
    <property type="term" value="F:tRNA-uridine 2-sulfurtransferase activity"/>
    <property type="evidence" value="ECO:0007669"/>
    <property type="project" value="UniProtKB-EC"/>
</dbReference>
<dbReference type="GO" id="GO:0002143">
    <property type="term" value="P:tRNA wobble position uridine thiolation"/>
    <property type="evidence" value="ECO:0007669"/>
    <property type="project" value="TreeGrafter"/>
</dbReference>
<dbReference type="CDD" id="cd01998">
    <property type="entry name" value="MnmA_TRMU-like"/>
    <property type="match status" value="1"/>
</dbReference>
<dbReference type="FunFam" id="2.30.30.280:FF:000001">
    <property type="entry name" value="tRNA-specific 2-thiouridylase MnmA"/>
    <property type="match status" value="1"/>
</dbReference>
<dbReference type="FunFam" id="2.40.30.10:FF:000023">
    <property type="entry name" value="tRNA-specific 2-thiouridylase MnmA"/>
    <property type="match status" value="1"/>
</dbReference>
<dbReference type="FunFam" id="3.40.50.620:FF:000004">
    <property type="entry name" value="tRNA-specific 2-thiouridylase MnmA"/>
    <property type="match status" value="1"/>
</dbReference>
<dbReference type="Gene3D" id="2.30.30.280">
    <property type="entry name" value="Adenine nucleotide alpha hydrolases-like domains"/>
    <property type="match status" value="1"/>
</dbReference>
<dbReference type="Gene3D" id="3.40.50.620">
    <property type="entry name" value="HUPs"/>
    <property type="match status" value="1"/>
</dbReference>
<dbReference type="Gene3D" id="2.40.30.10">
    <property type="entry name" value="Translation factors"/>
    <property type="match status" value="1"/>
</dbReference>
<dbReference type="HAMAP" id="MF_00144">
    <property type="entry name" value="tRNA_thiouridyl_MnmA"/>
    <property type="match status" value="1"/>
</dbReference>
<dbReference type="InterPro" id="IPR004506">
    <property type="entry name" value="MnmA-like"/>
</dbReference>
<dbReference type="InterPro" id="IPR046885">
    <property type="entry name" value="MnmA-like_C"/>
</dbReference>
<dbReference type="InterPro" id="IPR046884">
    <property type="entry name" value="MnmA-like_central"/>
</dbReference>
<dbReference type="InterPro" id="IPR023382">
    <property type="entry name" value="MnmA-like_central_sf"/>
</dbReference>
<dbReference type="InterPro" id="IPR014729">
    <property type="entry name" value="Rossmann-like_a/b/a_fold"/>
</dbReference>
<dbReference type="NCBIfam" id="NF001138">
    <property type="entry name" value="PRK00143.1"/>
    <property type="match status" value="1"/>
</dbReference>
<dbReference type="NCBIfam" id="TIGR00420">
    <property type="entry name" value="trmU"/>
    <property type="match status" value="1"/>
</dbReference>
<dbReference type="PANTHER" id="PTHR11933:SF5">
    <property type="entry name" value="MITOCHONDRIAL TRNA-SPECIFIC 2-THIOURIDYLASE 1"/>
    <property type="match status" value="1"/>
</dbReference>
<dbReference type="PANTHER" id="PTHR11933">
    <property type="entry name" value="TRNA 5-METHYLAMINOMETHYL-2-THIOURIDYLATE -METHYLTRANSFERASE"/>
    <property type="match status" value="1"/>
</dbReference>
<dbReference type="Pfam" id="PF03054">
    <property type="entry name" value="tRNA_Me_trans"/>
    <property type="match status" value="1"/>
</dbReference>
<dbReference type="Pfam" id="PF20258">
    <property type="entry name" value="tRNA_Me_trans_C"/>
    <property type="match status" value="1"/>
</dbReference>
<dbReference type="Pfam" id="PF20259">
    <property type="entry name" value="tRNA_Me_trans_M"/>
    <property type="match status" value="1"/>
</dbReference>
<dbReference type="SUPFAM" id="SSF52402">
    <property type="entry name" value="Adenine nucleotide alpha hydrolases-like"/>
    <property type="match status" value="1"/>
</dbReference>
<comment type="function">
    <text evidence="1">Catalyzes the 2-thiolation of uridine at the wobble position (U34) of tRNA, leading to the formation of s(2)U34.</text>
</comment>
<comment type="catalytic activity">
    <reaction evidence="1">
        <text>S-sulfanyl-L-cysteinyl-[protein] + uridine(34) in tRNA + AH2 + ATP = 2-thiouridine(34) in tRNA + L-cysteinyl-[protein] + A + AMP + diphosphate + H(+)</text>
        <dbReference type="Rhea" id="RHEA:47032"/>
        <dbReference type="Rhea" id="RHEA-COMP:10131"/>
        <dbReference type="Rhea" id="RHEA-COMP:11726"/>
        <dbReference type="Rhea" id="RHEA-COMP:11727"/>
        <dbReference type="Rhea" id="RHEA-COMP:11728"/>
        <dbReference type="ChEBI" id="CHEBI:13193"/>
        <dbReference type="ChEBI" id="CHEBI:15378"/>
        <dbReference type="ChEBI" id="CHEBI:17499"/>
        <dbReference type="ChEBI" id="CHEBI:29950"/>
        <dbReference type="ChEBI" id="CHEBI:30616"/>
        <dbReference type="ChEBI" id="CHEBI:33019"/>
        <dbReference type="ChEBI" id="CHEBI:61963"/>
        <dbReference type="ChEBI" id="CHEBI:65315"/>
        <dbReference type="ChEBI" id="CHEBI:87170"/>
        <dbReference type="ChEBI" id="CHEBI:456215"/>
        <dbReference type="EC" id="2.8.1.13"/>
    </reaction>
</comment>
<comment type="subcellular location">
    <subcellularLocation>
        <location evidence="1">Cytoplasm</location>
    </subcellularLocation>
</comment>
<comment type="similarity">
    <text evidence="1">Belongs to the MnmA/TRMU family.</text>
</comment>
<reference key="1">
    <citation type="journal article" date="2002" name="Proc. Natl. Acad. Sci. U.S.A.">
        <title>Genome sequence of Streptococcus mutans UA159, a cariogenic dental pathogen.</title>
        <authorList>
            <person name="Ajdic D.J."/>
            <person name="McShan W.M."/>
            <person name="McLaughlin R.E."/>
            <person name="Savic G."/>
            <person name="Chang J."/>
            <person name="Carson M.B."/>
            <person name="Primeaux C."/>
            <person name="Tian R."/>
            <person name="Kenton S."/>
            <person name="Jia H.G."/>
            <person name="Lin S.P."/>
            <person name="Qian Y."/>
            <person name="Li S."/>
            <person name="Zhu H."/>
            <person name="Najar F.Z."/>
            <person name="Lai H."/>
            <person name="White J."/>
            <person name="Roe B.A."/>
            <person name="Ferretti J.J."/>
        </authorList>
    </citation>
    <scope>NUCLEOTIDE SEQUENCE [LARGE SCALE GENOMIC DNA]</scope>
    <source>
        <strain>ATCC 700610 / UA159</strain>
    </source>
</reference>
<proteinExistence type="inferred from homology"/>
<sequence length="373" mass="41689">MTDNSKTRVVVGMSGGVDSSVTALLLKEQGYDVIGVFMKNWDDTDEFGVCTATEDYKDVAAVADQIGIPYYSVNFEKEYWDRVFEYFLAEYRAGRTPNPDVMCNKEIKFKAFLDYAMTLGADYVATGHYAQVSRDADGTVHMLRGADNNKDQTYFLSQLSQEQLQKVMFPLGHLQKPRVREIAEKAGLVTAKKKDSTGICFIGEKNFKEFLSSYLPAQKGRMMTIDGRDMGEHNGLMYYTIGQRGGMGIGGQKGGDNAPWFVVGKDLSQNILYVGQGFYHDALMSTSLTASQVHFTQNMPDKFTLNCTAKFRYRQPDSKVDVKVNGDKAEVIFDEPQRAITPGQAVVFYDGDECLGGGLIDNAYQEEKICQYI</sequence>
<accession>Q8DRS4</accession>
<gene>
    <name evidence="1" type="primary">mnmA</name>
    <name type="synonym">trmU</name>
    <name type="ordered locus">SMU_2143c</name>
</gene>
<evidence type="ECO:0000255" key="1">
    <source>
        <dbReference type="HAMAP-Rule" id="MF_00144"/>
    </source>
</evidence>